<comment type="function">
    <text evidence="1">Component of the SWR1 complex which mediates the ATP-dependent exchange of histone H2A for the H2A variant HZT1 leading to transcriptional regulation of selected genes by chromatin remodeling. Component of the NuA4 histone acetyltransferase complex which is involved in transcriptional activation of selected genes principally by acetylation of nucleosomal histone H4 and H2A. The NuA4 complex is also involved in DNA repair (By similarity).</text>
</comment>
<comment type="subunit">
    <text evidence="1">Component of the SWR1 chromatin-remodeling complex and of the NuA4 histone acetyltransferase complex.</text>
</comment>
<comment type="subcellular location">
    <subcellularLocation>
        <location evidence="1">Nucleus</location>
    </subcellularLocation>
</comment>
<comment type="similarity">
    <text evidence="3">Belongs to the SWC4 family.</text>
</comment>
<organism>
    <name type="scientific">Kluyveromyces lactis (strain ATCC 8585 / CBS 2359 / DSM 70799 / NBRC 1267 / NRRL Y-1140 / WM37)</name>
    <name type="common">Yeast</name>
    <name type="synonym">Candida sphaerica</name>
    <dbReference type="NCBI Taxonomy" id="284590"/>
    <lineage>
        <taxon>Eukaryota</taxon>
        <taxon>Fungi</taxon>
        <taxon>Dikarya</taxon>
        <taxon>Ascomycota</taxon>
        <taxon>Saccharomycotina</taxon>
        <taxon>Saccharomycetes</taxon>
        <taxon>Saccharomycetales</taxon>
        <taxon>Saccharomycetaceae</taxon>
        <taxon>Kluyveromyces</taxon>
    </lineage>
</organism>
<sequence>MSSSDIFDVLNIRPKSSSPDAEAQTPTPSSGTVKHNKPQVTGIQRELYSLLGDNTPTVPIKQGNKFKDSLNSNIKPSPWSFVEFEANSHLKLRHWVKGSKELVGATVEPSSFAKFNQHLTIPSFDEQEFQQFMNGNNSEWKYGEVQYLFDLCRNYDMKWFVIADRFNYNGTERKLDDLKEMFYTVCQWYFLYKDPDNPLISQLNFPKEKELERKKYLERLLKRTAAEIAEEEALIIESRKFEMAAKKTLQEREALLQLLDHPHSDKPISQFLTSQGMSQLYANLLNDKNRKRKPDSNTPENPWMKQQQQFAQQRQQIQHQQQFKQGQIIQQQQQQQQQQQQQQQQKQQKQQKPQSDQITSKDQQPSENIEVKTEGQRLNKKQKIELQNALRRKQDSEYAEHLLEKFTLEERKALGVIAHGEKLAPGVYLRSSKISTYKPAVQNKIVATLQELGLPVRPAMPSLEVVQEHEKLLKKIATLLELKKQVDKLTAEKQIVK</sequence>
<evidence type="ECO:0000250" key="1"/>
<evidence type="ECO:0000256" key="2">
    <source>
        <dbReference type="SAM" id="MobiDB-lite"/>
    </source>
</evidence>
<evidence type="ECO:0000305" key="3"/>
<name>SWC4_KLULA</name>
<accession>Q6CSS3</accession>
<feature type="chain" id="PRO_0000076342" description="SWR1-complex protein 4">
    <location>
        <begin position="1"/>
        <end position="497"/>
    </location>
</feature>
<feature type="region of interest" description="Disordered" evidence="2">
    <location>
        <begin position="1"/>
        <end position="38"/>
    </location>
</feature>
<feature type="region of interest" description="Disordered" evidence="2">
    <location>
        <begin position="286"/>
        <end position="317"/>
    </location>
</feature>
<feature type="region of interest" description="Disordered" evidence="2">
    <location>
        <begin position="344"/>
        <end position="377"/>
    </location>
</feature>
<feature type="compositionally biased region" description="Polar residues" evidence="2">
    <location>
        <begin position="14"/>
        <end position="38"/>
    </location>
</feature>
<feature type="compositionally biased region" description="Low complexity" evidence="2">
    <location>
        <begin position="306"/>
        <end position="317"/>
    </location>
</feature>
<feature type="compositionally biased region" description="Low complexity" evidence="2">
    <location>
        <begin position="344"/>
        <end position="358"/>
    </location>
</feature>
<keyword id="KW-0010">Activator</keyword>
<keyword id="KW-0156">Chromatin regulator</keyword>
<keyword id="KW-0227">DNA damage</keyword>
<keyword id="KW-0234">DNA repair</keyword>
<keyword id="KW-0539">Nucleus</keyword>
<keyword id="KW-1185">Reference proteome</keyword>
<keyword id="KW-0804">Transcription</keyword>
<keyword id="KW-0805">Transcription regulation</keyword>
<protein>
    <recommendedName>
        <fullName>SWR1-complex protein 4</fullName>
    </recommendedName>
</protein>
<proteinExistence type="inferred from homology"/>
<gene>
    <name type="primary">SWC4</name>
    <name type="ordered locus">KLLA0C18315g</name>
</gene>
<reference key="1">
    <citation type="journal article" date="2004" name="Nature">
        <title>Genome evolution in yeasts.</title>
        <authorList>
            <person name="Dujon B."/>
            <person name="Sherman D."/>
            <person name="Fischer G."/>
            <person name="Durrens P."/>
            <person name="Casaregola S."/>
            <person name="Lafontaine I."/>
            <person name="de Montigny J."/>
            <person name="Marck C."/>
            <person name="Neuveglise C."/>
            <person name="Talla E."/>
            <person name="Goffard N."/>
            <person name="Frangeul L."/>
            <person name="Aigle M."/>
            <person name="Anthouard V."/>
            <person name="Babour A."/>
            <person name="Barbe V."/>
            <person name="Barnay S."/>
            <person name="Blanchin S."/>
            <person name="Beckerich J.-M."/>
            <person name="Beyne E."/>
            <person name="Bleykasten C."/>
            <person name="Boisrame A."/>
            <person name="Boyer J."/>
            <person name="Cattolico L."/>
            <person name="Confanioleri F."/>
            <person name="de Daruvar A."/>
            <person name="Despons L."/>
            <person name="Fabre E."/>
            <person name="Fairhead C."/>
            <person name="Ferry-Dumazet H."/>
            <person name="Groppi A."/>
            <person name="Hantraye F."/>
            <person name="Hennequin C."/>
            <person name="Jauniaux N."/>
            <person name="Joyet P."/>
            <person name="Kachouri R."/>
            <person name="Kerrest A."/>
            <person name="Koszul R."/>
            <person name="Lemaire M."/>
            <person name="Lesur I."/>
            <person name="Ma L."/>
            <person name="Muller H."/>
            <person name="Nicaud J.-M."/>
            <person name="Nikolski M."/>
            <person name="Oztas S."/>
            <person name="Ozier-Kalogeropoulos O."/>
            <person name="Pellenz S."/>
            <person name="Potier S."/>
            <person name="Richard G.-F."/>
            <person name="Straub M.-L."/>
            <person name="Suleau A."/>
            <person name="Swennen D."/>
            <person name="Tekaia F."/>
            <person name="Wesolowski-Louvel M."/>
            <person name="Westhof E."/>
            <person name="Wirth B."/>
            <person name="Zeniou-Meyer M."/>
            <person name="Zivanovic Y."/>
            <person name="Bolotin-Fukuhara M."/>
            <person name="Thierry A."/>
            <person name="Bouchier C."/>
            <person name="Caudron B."/>
            <person name="Scarpelli C."/>
            <person name="Gaillardin C."/>
            <person name="Weissenbach J."/>
            <person name="Wincker P."/>
            <person name="Souciet J.-L."/>
        </authorList>
    </citation>
    <scope>NUCLEOTIDE SEQUENCE [LARGE SCALE GENOMIC DNA]</scope>
    <source>
        <strain>ATCC 8585 / CBS 2359 / DSM 70799 / NBRC 1267 / NRRL Y-1140 / WM37</strain>
    </source>
</reference>
<dbReference type="EMBL" id="CR382123">
    <property type="protein sequence ID" value="CAH01867.1"/>
    <property type="molecule type" value="Genomic_DNA"/>
</dbReference>
<dbReference type="RefSeq" id="XP_453016.1">
    <property type="nucleotide sequence ID" value="XM_453016.1"/>
</dbReference>
<dbReference type="SMR" id="Q6CSS3"/>
<dbReference type="FunCoup" id="Q6CSS3">
    <property type="interactions" value="1050"/>
</dbReference>
<dbReference type="STRING" id="284590.Q6CSS3"/>
<dbReference type="PaxDb" id="284590-Q6CSS3"/>
<dbReference type="KEGG" id="kla:KLLA0_C18315g"/>
<dbReference type="eggNOG" id="KOG2656">
    <property type="taxonomic scope" value="Eukaryota"/>
</dbReference>
<dbReference type="HOGENOM" id="CLU_018539_4_0_1"/>
<dbReference type="InParanoid" id="Q6CSS3"/>
<dbReference type="OMA" id="GNTTMYQ"/>
<dbReference type="Proteomes" id="UP000000598">
    <property type="component" value="Chromosome C"/>
</dbReference>
<dbReference type="GO" id="GO:0035267">
    <property type="term" value="C:NuA4 histone acetyltransferase complex"/>
    <property type="evidence" value="ECO:0007669"/>
    <property type="project" value="InterPro"/>
</dbReference>
<dbReference type="GO" id="GO:0000812">
    <property type="term" value="C:Swr1 complex"/>
    <property type="evidence" value="ECO:0007669"/>
    <property type="project" value="TreeGrafter"/>
</dbReference>
<dbReference type="GO" id="GO:0003714">
    <property type="term" value="F:transcription corepressor activity"/>
    <property type="evidence" value="ECO:0007669"/>
    <property type="project" value="TreeGrafter"/>
</dbReference>
<dbReference type="GO" id="GO:0006338">
    <property type="term" value="P:chromatin remodeling"/>
    <property type="evidence" value="ECO:0007669"/>
    <property type="project" value="InterPro"/>
</dbReference>
<dbReference type="GO" id="GO:0006281">
    <property type="term" value="P:DNA repair"/>
    <property type="evidence" value="ECO:0007669"/>
    <property type="project" value="UniProtKB-KW"/>
</dbReference>
<dbReference type="GO" id="GO:0000122">
    <property type="term" value="P:negative regulation of transcription by RNA polymerase II"/>
    <property type="evidence" value="ECO:0007669"/>
    <property type="project" value="TreeGrafter"/>
</dbReference>
<dbReference type="Gene3D" id="1.10.10.60">
    <property type="entry name" value="Homeodomain-like"/>
    <property type="match status" value="1"/>
</dbReference>
<dbReference type="InterPro" id="IPR032563">
    <property type="entry name" value="DAMP1_SANT-like"/>
</dbReference>
<dbReference type="InterPro" id="IPR027109">
    <property type="entry name" value="Swc4/Dmap1"/>
</dbReference>
<dbReference type="PANTHER" id="PTHR12855:SF10">
    <property type="entry name" value="DNA METHYLTRANSFERASE 1-ASSOCIATED PROTEIN 1"/>
    <property type="match status" value="1"/>
</dbReference>
<dbReference type="PANTHER" id="PTHR12855">
    <property type="entry name" value="DNA METHYLTRANSFERASE 1-ASSOCIATED PROTEIN 1 FAMILY MEMBER"/>
    <property type="match status" value="1"/>
</dbReference>
<dbReference type="Pfam" id="PF16282">
    <property type="entry name" value="SANT_DAMP1_like"/>
    <property type="match status" value="1"/>
</dbReference>